<feature type="chain" id="PRO_1000166603" description="ATP synthase subunit beta">
    <location>
        <begin position="1"/>
        <end position="463"/>
    </location>
</feature>
<feature type="binding site" evidence="1">
    <location>
        <begin position="152"/>
        <end position="159"/>
    </location>
    <ligand>
        <name>ATP</name>
        <dbReference type="ChEBI" id="CHEBI:30616"/>
    </ligand>
</feature>
<comment type="function">
    <text evidence="1">Produces ATP from ADP in the presence of a proton gradient across the membrane. The catalytic sites are hosted primarily by the beta subunits.</text>
</comment>
<comment type="catalytic activity">
    <reaction evidence="1">
        <text>ATP + H2O + 4 H(+)(in) = ADP + phosphate + 5 H(+)(out)</text>
        <dbReference type="Rhea" id="RHEA:57720"/>
        <dbReference type="ChEBI" id="CHEBI:15377"/>
        <dbReference type="ChEBI" id="CHEBI:15378"/>
        <dbReference type="ChEBI" id="CHEBI:30616"/>
        <dbReference type="ChEBI" id="CHEBI:43474"/>
        <dbReference type="ChEBI" id="CHEBI:456216"/>
        <dbReference type="EC" id="7.1.2.2"/>
    </reaction>
</comment>
<comment type="subunit">
    <text evidence="1">F-type ATPases have 2 components, CF(1) - the catalytic core - and CF(0) - the membrane proton channel. CF(1) has five subunits: alpha(3), beta(3), gamma(1), delta(1), epsilon(1). CF(0) has three main subunits: a(1), b(2) and c(9-12). The alpha and beta chains form an alternating ring which encloses part of the gamma chain. CF(1) is attached to CF(0) by a central stalk formed by the gamma and epsilon chains, while a peripheral stalk is formed by the delta and b chains.</text>
</comment>
<comment type="subcellular location">
    <subcellularLocation>
        <location evidence="1">Cell inner membrane</location>
        <topology evidence="1">Peripheral membrane protein</topology>
    </subcellularLocation>
</comment>
<comment type="similarity">
    <text evidence="1">Belongs to the ATPase alpha/beta chains family.</text>
</comment>
<gene>
    <name evidence="1" type="primary">atpD</name>
    <name type="ordered locus">Sbal223_4310</name>
</gene>
<protein>
    <recommendedName>
        <fullName evidence="1">ATP synthase subunit beta</fullName>
        <ecNumber evidence="1">7.1.2.2</ecNumber>
    </recommendedName>
    <alternativeName>
        <fullName evidence="1">ATP synthase F1 sector subunit beta</fullName>
    </alternativeName>
    <alternativeName>
        <fullName evidence="1">F-ATPase subunit beta</fullName>
    </alternativeName>
</protein>
<evidence type="ECO:0000255" key="1">
    <source>
        <dbReference type="HAMAP-Rule" id="MF_01347"/>
    </source>
</evidence>
<keyword id="KW-0066">ATP synthesis</keyword>
<keyword id="KW-0067">ATP-binding</keyword>
<keyword id="KW-0997">Cell inner membrane</keyword>
<keyword id="KW-1003">Cell membrane</keyword>
<keyword id="KW-0139">CF(1)</keyword>
<keyword id="KW-0375">Hydrogen ion transport</keyword>
<keyword id="KW-0406">Ion transport</keyword>
<keyword id="KW-0472">Membrane</keyword>
<keyword id="KW-0547">Nucleotide-binding</keyword>
<keyword id="KW-1278">Translocase</keyword>
<keyword id="KW-0813">Transport</keyword>
<name>ATPB_SHEB2</name>
<organism>
    <name type="scientific">Shewanella baltica (strain OS223)</name>
    <dbReference type="NCBI Taxonomy" id="407976"/>
    <lineage>
        <taxon>Bacteria</taxon>
        <taxon>Pseudomonadati</taxon>
        <taxon>Pseudomonadota</taxon>
        <taxon>Gammaproteobacteria</taxon>
        <taxon>Alteromonadales</taxon>
        <taxon>Shewanellaceae</taxon>
        <taxon>Shewanella</taxon>
    </lineage>
</organism>
<proteinExistence type="inferred from homology"/>
<sequence length="463" mass="49906">MSTGTVVQVIGAVVDVEFPQDAVPQVYDALKIVGEGPCNGLVLEVQQQLGGGVVRTIAMGSSDGLRRGLEVVNSGSPITVPVGTATLGRIMNVLGEPIDEAGPIGEEERYVIHRTAPSYEDQSSSTELLETGIKVIDLVCPFAKGGKVGLFGGAGVGKTVNMMELINNIAKAHSGLSVFAGVGERTREGNDFYYEMKDSGVLDKVAMVYGQMNEPPGNRLRVALSGLTMAEKFRDEGRDVLLFVDNIYRYTLAGTEVSALLGRMPSAVGYQPTLAEEMGVLQERITSTKTGSITSVQAVYVPADDLTDPSPATTFAHLDATVVLSRQIASLGIYPAVDPLDSTSRQLDPLVVGQEHYDVANGVQTVLQRYKELKDIIAILGMDELSDEDKTTVFRARKIERFLSQPFFVAEVFTGSPGKYVSLKDTIRGFKGILNGEFDHLPEQAFYMVGSIDEVIEKANKKK</sequence>
<reference key="1">
    <citation type="submission" date="2008-12" db="EMBL/GenBank/DDBJ databases">
        <title>Complete sequence of chromosome of Shewanella baltica OS223.</title>
        <authorList>
            <consortium name="US DOE Joint Genome Institute"/>
            <person name="Lucas S."/>
            <person name="Copeland A."/>
            <person name="Lapidus A."/>
            <person name="Glavina del Rio T."/>
            <person name="Dalin E."/>
            <person name="Tice H."/>
            <person name="Bruce D."/>
            <person name="Goodwin L."/>
            <person name="Pitluck S."/>
            <person name="Chertkov O."/>
            <person name="Meincke L."/>
            <person name="Brettin T."/>
            <person name="Detter J.C."/>
            <person name="Han C."/>
            <person name="Kuske C.R."/>
            <person name="Larimer F."/>
            <person name="Land M."/>
            <person name="Hauser L."/>
            <person name="Kyrpides N."/>
            <person name="Ovchinnikova G."/>
            <person name="Brettar I."/>
            <person name="Rodrigues J."/>
            <person name="Konstantinidis K."/>
            <person name="Tiedje J."/>
        </authorList>
    </citation>
    <scope>NUCLEOTIDE SEQUENCE [LARGE SCALE GENOMIC DNA]</scope>
    <source>
        <strain>OS223</strain>
    </source>
</reference>
<accession>B8EDV0</accession>
<dbReference type="EC" id="7.1.2.2" evidence="1"/>
<dbReference type="EMBL" id="CP001252">
    <property type="protein sequence ID" value="ACK48776.1"/>
    <property type="molecule type" value="Genomic_DNA"/>
</dbReference>
<dbReference type="RefSeq" id="WP_006083845.1">
    <property type="nucleotide sequence ID" value="NC_011663.1"/>
</dbReference>
<dbReference type="SMR" id="B8EDV0"/>
<dbReference type="GeneID" id="11775069"/>
<dbReference type="KEGG" id="sbp:Sbal223_4310"/>
<dbReference type="HOGENOM" id="CLU_022398_0_2_6"/>
<dbReference type="Proteomes" id="UP000002507">
    <property type="component" value="Chromosome"/>
</dbReference>
<dbReference type="GO" id="GO:0005886">
    <property type="term" value="C:plasma membrane"/>
    <property type="evidence" value="ECO:0007669"/>
    <property type="project" value="UniProtKB-SubCell"/>
</dbReference>
<dbReference type="GO" id="GO:0045259">
    <property type="term" value="C:proton-transporting ATP synthase complex"/>
    <property type="evidence" value="ECO:0007669"/>
    <property type="project" value="UniProtKB-KW"/>
</dbReference>
<dbReference type="GO" id="GO:0005524">
    <property type="term" value="F:ATP binding"/>
    <property type="evidence" value="ECO:0007669"/>
    <property type="project" value="UniProtKB-UniRule"/>
</dbReference>
<dbReference type="GO" id="GO:0016887">
    <property type="term" value="F:ATP hydrolysis activity"/>
    <property type="evidence" value="ECO:0007669"/>
    <property type="project" value="InterPro"/>
</dbReference>
<dbReference type="GO" id="GO:0046933">
    <property type="term" value="F:proton-transporting ATP synthase activity, rotational mechanism"/>
    <property type="evidence" value="ECO:0007669"/>
    <property type="project" value="UniProtKB-UniRule"/>
</dbReference>
<dbReference type="CDD" id="cd18110">
    <property type="entry name" value="ATP-synt_F1_beta_C"/>
    <property type="match status" value="1"/>
</dbReference>
<dbReference type="CDD" id="cd18115">
    <property type="entry name" value="ATP-synt_F1_beta_N"/>
    <property type="match status" value="1"/>
</dbReference>
<dbReference type="CDD" id="cd01133">
    <property type="entry name" value="F1-ATPase_beta_CD"/>
    <property type="match status" value="1"/>
</dbReference>
<dbReference type="FunFam" id="1.10.1140.10:FF:000001">
    <property type="entry name" value="ATP synthase subunit beta"/>
    <property type="match status" value="1"/>
</dbReference>
<dbReference type="FunFam" id="2.40.10.170:FF:000003">
    <property type="entry name" value="ATP synthase subunit beta"/>
    <property type="match status" value="1"/>
</dbReference>
<dbReference type="FunFam" id="3.40.50.300:FF:000004">
    <property type="entry name" value="ATP synthase subunit beta"/>
    <property type="match status" value="1"/>
</dbReference>
<dbReference type="Gene3D" id="2.40.10.170">
    <property type="match status" value="1"/>
</dbReference>
<dbReference type="Gene3D" id="1.10.1140.10">
    <property type="entry name" value="Bovine Mitochondrial F1-atpase, Atp Synthase Beta Chain, Chain D, domain 3"/>
    <property type="match status" value="1"/>
</dbReference>
<dbReference type="Gene3D" id="3.40.50.300">
    <property type="entry name" value="P-loop containing nucleotide triphosphate hydrolases"/>
    <property type="match status" value="1"/>
</dbReference>
<dbReference type="HAMAP" id="MF_01347">
    <property type="entry name" value="ATP_synth_beta_bact"/>
    <property type="match status" value="1"/>
</dbReference>
<dbReference type="InterPro" id="IPR003593">
    <property type="entry name" value="AAA+_ATPase"/>
</dbReference>
<dbReference type="InterPro" id="IPR055190">
    <property type="entry name" value="ATP-synt_VA_C"/>
</dbReference>
<dbReference type="InterPro" id="IPR005722">
    <property type="entry name" value="ATP_synth_F1_bsu"/>
</dbReference>
<dbReference type="InterPro" id="IPR020003">
    <property type="entry name" value="ATPase_a/bsu_AS"/>
</dbReference>
<dbReference type="InterPro" id="IPR050053">
    <property type="entry name" value="ATPase_alpha/beta_chains"/>
</dbReference>
<dbReference type="InterPro" id="IPR004100">
    <property type="entry name" value="ATPase_F1/V1/A1_a/bsu_N"/>
</dbReference>
<dbReference type="InterPro" id="IPR036121">
    <property type="entry name" value="ATPase_F1/V1/A1_a/bsu_N_sf"/>
</dbReference>
<dbReference type="InterPro" id="IPR000194">
    <property type="entry name" value="ATPase_F1/V1/A1_a/bsu_nucl-bd"/>
</dbReference>
<dbReference type="InterPro" id="IPR024034">
    <property type="entry name" value="ATPase_F1/V1_b/a_C"/>
</dbReference>
<dbReference type="InterPro" id="IPR027417">
    <property type="entry name" value="P-loop_NTPase"/>
</dbReference>
<dbReference type="NCBIfam" id="TIGR01039">
    <property type="entry name" value="atpD"/>
    <property type="match status" value="1"/>
</dbReference>
<dbReference type="PANTHER" id="PTHR15184">
    <property type="entry name" value="ATP SYNTHASE"/>
    <property type="match status" value="1"/>
</dbReference>
<dbReference type="PANTHER" id="PTHR15184:SF71">
    <property type="entry name" value="ATP SYNTHASE SUBUNIT BETA, MITOCHONDRIAL"/>
    <property type="match status" value="1"/>
</dbReference>
<dbReference type="Pfam" id="PF00006">
    <property type="entry name" value="ATP-synt_ab"/>
    <property type="match status" value="1"/>
</dbReference>
<dbReference type="Pfam" id="PF02874">
    <property type="entry name" value="ATP-synt_ab_N"/>
    <property type="match status" value="1"/>
</dbReference>
<dbReference type="Pfam" id="PF22919">
    <property type="entry name" value="ATP-synt_VA_C"/>
    <property type="match status" value="1"/>
</dbReference>
<dbReference type="SMART" id="SM00382">
    <property type="entry name" value="AAA"/>
    <property type="match status" value="1"/>
</dbReference>
<dbReference type="SUPFAM" id="SSF47917">
    <property type="entry name" value="C-terminal domain of alpha and beta subunits of F1 ATP synthase"/>
    <property type="match status" value="1"/>
</dbReference>
<dbReference type="SUPFAM" id="SSF50615">
    <property type="entry name" value="N-terminal domain of alpha and beta subunits of F1 ATP synthase"/>
    <property type="match status" value="1"/>
</dbReference>
<dbReference type="SUPFAM" id="SSF52540">
    <property type="entry name" value="P-loop containing nucleoside triphosphate hydrolases"/>
    <property type="match status" value="1"/>
</dbReference>
<dbReference type="PROSITE" id="PS00152">
    <property type="entry name" value="ATPASE_ALPHA_BETA"/>
    <property type="match status" value="1"/>
</dbReference>